<name>SSRP_GLOC7</name>
<sequence>MSNQNGKTKLITDNRQARFLYEILETYEAGIELTGTEVKSIRAGRINLKDGYALIRNGEAWLINVHISPYEASGQYFNHDPRRTRKLLLHRKEINKLIGQVEQKGLTLVPLKMYFKDSWVKVSIGLAQGKKLHDKRETLKRRQDERDMQRAMKRW</sequence>
<reference key="1">
    <citation type="journal article" date="2011" name="MBio">
        <title>Novel metabolic attributes of the genus Cyanothece, comprising a group of unicellular nitrogen-fixing Cyanobacteria.</title>
        <authorList>
            <person name="Bandyopadhyay A."/>
            <person name="Elvitigala T."/>
            <person name="Welsh E."/>
            <person name="Stockel J."/>
            <person name="Liberton M."/>
            <person name="Min H."/>
            <person name="Sherman L.A."/>
            <person name="Pakrasi H.B."/>
        </authorList>
    </citation>
    <scope>NUCLEOTIDE SEQUENCE [LARGE SCALE GENOMIC DNA]</scope>
    <source>
        <strain>PCC 7424</strain>
    </source>
</reference>
<evidence type="ECO:0000255" key="1">
    <source>
        <dbReference type="HAMAP-Rule" id="MF_00023"/>
    </source>
</evidence>
<protein>
    <recommendedName>
        <fullName evidence="1">SsrA-binding protein</fullName>
    </recommendedName>
    <alternativeName>
        <fullName evidence="1">Small protein B</fullName>
    </alternativeName>
</protein>
<dbReference type="EMBL" id="CP001291">
    <property type="protein sequence ID" value="ACK70473.1"/>
    <property type="molecule type" value="Genomic_DNA"/>
</dbReference>
<dbReference type="RefSeq" id="WP_015954079.1">
    <property type="nucleotide sequence ID" value="NC_011729.1"/>
</dbReference>
<dbReference type="SMR" id="B7KF17"/>
<dbReference type="STRING" id="65393.PCC7424_2045"/>
<dbReference type="KEGG" id="cyc:PCC7424_2045"/>
<dbReference type="eggNOG" id="COG0691">
    <property type="taxonomic scope" value="Bacteria"/>
</dbReference>
<dbReference type="HOGENOM" id="CLU_108953_0_1_3"/>
<dbReference type="OrthoDB" id="9805462at2"/>
<dbReference type="Proteomes" id="UP000002384">
    <property type="component" value="Chromosome"/>
</dbReference>
<dbReference type="GO" id="GO:0005829">
    <property type="term" value="C:cytosol"/>
    <property type="evidence" value="ECO:0007669"/>
    <property type="project" value="TreeGrafter"/>
</dbReference>
<dbReference type="GO" id="GO:0003723">
    <property type="term" value="F:RNA binding"/>
    <property type="evidence" value="ECO:0007669"/>
    <property type="project" value="UniProtKB-UniRule"/>
</dbReference>
<dbReference type="GO" id="GO:0070929">
    <property type="term" value="P:trans-translation"/>
    <property type="evidence" value="ECO:0007669"/>
    <property type="project" value="UniProtKB-UniRule"/>
</dbReference>
<dbReference type="CDD" id="cd09294">
    <property type="entry name" value="SmpB"/>
    <property type="match status" value="1"/>
</dbReference>
<dbReference type="Gene3D" id="2.40.280.10">
    <property type="match status" value="1"/>
</dbReference>
<dbReference type="HAMAP" id="MF_00023">
    <property type="entry name" value="SmpB"/>
    <property type="match status" value="1"/>
</dbReference>
<dbReference type="InterPro" id="IPR023620">
    <property type="entry name" value="SmpB"/>
</dbReference>
<dbReference type="InterPro" id="IPR000037">
    <property type="entry name" value="SsrA-bd_prot"/>
</dbReference>
<dbReference type="InterPro" id="IPR020081">
    <property type="entry name" value="SsrA-bd_prot_CS"/>
</dbReference>
<dbReference type="NCBIfam" id="NF003843">
    <property type="entry name" value="PRK05422.1"/>
    <property type="match status" value="1"/>
</dbReference>
<dbReference type="NCBIfam" id="TIGR00086">
    <property type="entry name" value="smpB"/>
    <property type="match status" value="1"/>
</dbReference>
<dbReference type="PANTHER" id="PTHR30308:SF2">
    <property type="entry name" value="SSRA-BINDING PROTEIN"/>
    <property type="match status" value="1"/>
</dbReference>
<dbReference type="PANTHER" id="PTHR30308">
    <property type="entry name" value="TMRNA-BINDING COMPONENT OF TRANS-TRANSLATION TAGGING COMPLEX"/>
    <property type="match status" value="1"/>
</dbReference>
<dbReference type="Pfam" id="PF01668">
    <property type="entry name" value="SmpB"/>
    <property type="match status" value="1"/>
</dbReference>
<dbReference type="SUPFAM" id="SSF74982">
    <property type="entry name" value="Small protein B (SmpB)"/>
    <property type="match status" value="1"/>
</dbReference>
<dbReference type="PROSITE" id="PS01317">
    <property type="entry name" value="SSRP"/>
    <property type="match status" value="1"/>
</dbReference>
<feature type="chain" id="PRO_1000116418" description="SsrA-binding protein">
    <location>
        <begin position="1"/>
        <end position="155"/>
    </location>
</feature>
<organism>
    <name type="scientific">Gloeothece citriformis (strain PCC 7424)</name>
    <name type="common">Cyanothece sp. (strain PCC 7424)</name>
    <dbReference type="NCBI Taxonomy" id="65393"/>
    <lineage>
        <taxon>Bacteria</taxon>
        <taxon>Bacillati</taxon>
        <taxon>Cyanobacteriota</taxon>
        <taxon>Cyanophyceae</taxon>
        <taxon>Oscillatoriophycideae</taxon>
        <taxon>Chroococcales</taxon>
        <taxon>Aphanothecaceae</taxon>
        <taxon>Gloeothece</taxon>
        <taxon>Gloeothece citriformis</taxon>
    </lineage>
</organism>
<accession>B7KF17</accession>
<keyword id="KW-0963">Cytoplasm</keyword>
<keyword id="KW-1185">Reference proteome</keyword>
<keyword id="KW-0694">RNA-binding</keyword>
<gene>
    <name evidence="1" type="primary">smpB</name>
    <name type="ordered locus">PCC7424_2045</name>
</gene>
<comment type="function">
    <text evidence="1">Required for rescue of stalled ribosomes mediated by trans-translation. Binds to transfer-messenger RNA (tmRNA), required for stable association of tmRNA with ribosomes. tmRNA and SmpB together mimic tRNA shape, replacing the anticodon stem-loop with SmpB. tmRNA is encoded by the ssrA gene; the 2 termini fold to resemble tRNA(Ala) and it encodes a 'tag peptide', a short internal open reading frame. During trans-translation Ala-aminoacylated tmRNA acts like a tRNA, entering the A-site of stalled ribosomes, displacing the stalled mRNA. The ribosome then switches to translate the ORF on the tmRNA; the nascent peptide is terminated with the 'tag peptide' encoded by the tmRNA and targeted for degradation. The ribosome is freed to recommence translation, which seems to be the essential function of trans-translation.</text>
</comment>
<comment type="subcellular location">
    <subcellularLocation>
        <location evidence="1">Cytoplasm</location>
    </subcellularLocation>
    <text evidence="1">The tmRNA-SmpB complex associates with stalled 70S ribosomes.</text>
</comment>
<comment type="similarity">
    <text evidence="1">Belongs to the SmpB family.</text>
</comment>
<proteinExistence type="inferred from homology"/>